<comment type="subcellular location">
    <subcellularLocation>
        <location evidence="1">Nucleus</location>
    </subcellularLocation>
</comment>
<sequence length="571" mass="62389">MKAAYDCRATKRACSDRKVLILGTNWANPQSGTMEKITISIVNDKATGNKRNIEEEADESPPPKKLRSAVFLCSTPSSAPHCSRDVDVFDEFDDTILERSEDESDSPLHMTLVQIEELLEGDSDYAAEPPGWEEESDTVLQELAVPNADGSQRNIVEFRNLNSPLVEEQSDSSHTLTEETVCSQDTSNYAAMAPSPCWSSISTAEQNGEAGDNVLSVCPITSPVLHKNEVNRGSVQDCSEVCNDSDICSTLSSSHLPGDLKVVDEISEDSDIPFDGDIDELLTLSPGDTTSEDEDNKITSESTPASSELESVPLVHSHTEAIYKTPSSLQCPVTFTASTDPSNLSQLSVSSVTAINGQNNSNKVPLPPSDTAPGPQLPADPCSQSSKVLKVEPKENKVIKETGFEQGEKSCAAPLDHTVKENLGQTSKEQVVVSIGCKKKVKPSQLQQKKLGTLPTKPQAACRPQISNAELEKNRNIYRDRVMMHLEVHNIPGEPNYELATLLNETSRENPTWQHPSDYTRRNYYVRKQPVPCSLNDWVMRNGGPAIERFHGLPCTFQRSPMPGVLPTGPS</sequence>
<keyword id="KW-0539">Nucleus</keyword>
<keyword id="KW-1185">Reference proteome</keyword>
<evidence type="ECO:0000250" key="1">
    <source>
        <dbReference type="UniProtKB" id="Q96BU1"/>
    </source>
</evidence>
<evidence type="ECO:0000256" key="2">
    <source>
        <dbReference type="SAM" id="MobiDB-lite"/>
    </source>
</evidence>
<evidence type="ECO:0000312" key="3">
    <source>
        <dbReference type="EMBL" id="CAJ82040.1"/>
    </source>
</evidence>
<dbReference type="EMBL" id="CR848528">
    <property type="protein sequence ID" value="CAJ82040.1"/>
    <property type="molecule type" value="mRNA"/>
</dbReference>
<dbReference type="RefSeq" id="NP_001039055.1">
    <property type="nucleotide sequence ID" value="NM_001045590.1"/>
</dbReference>
<dbReference type="PaxDb" id="8364-ENSXETP00000059087"/>
<dbReference type="GeneID" id="733837"/>
<dbReference type="KEGG" id="xtr:733837"/>
<dbReference type="AGR" id="Xenbase:XB-GENE-495102"/>
<dbReference type="CTD" id="64766"/>
<dbReference type="Xenbase" id="XB-GENE-495102">
    <property type="gene designation" value="s100pbp"/>
</dbReference>
<dbReference type="eggNOG" id="ENOG502S5YT">
    <property type="taxonomic scope" value="Eukaryota"/>
</dbReference>
<dbReference type="InParanoid" id="Q28DZ0"/>
<dbReference type="OMA" id="SSACKMN"/>
<dbReference type="OrthoDB" id="8945510at2759"/>
<dbReference type="Proteomes" id="UP000008143">
    <property type="component" value="Chromosome 2"/>
</dbReference>
<dbReference type="GO" id="GO:0005634">
    <property type="term" value="C:nucleus"/>
    <property type="evidence" value="ECO:0007669"/>
    <property type="project" value="UniProtKB-SubCell"/>
</dbReference>
<dbReference type="GO" id="GO:0048306">
    <property type="term" value="F:calcium-dependent protein binding"/>
    <property type="evidence" value="ECO:0007669"/>
    <property type="project" value="InterPro"/>
</dbReference>
<dbReference type="InterPro" id="IPR026097">
    <property type="entry name" value="S100PBP"/>
</dbReference>
<dbReference type="Pfam" id="PF15427">
    <property type="entry name" value="S100PBPR"/>
    <property type="match status" value="1"/>
</dbReference>
<accession>Q28DZ0</accession>
<reference evidence="3" key="1">
    <citation type="submission" date="2006-10" db="EMBL/GenBank/DDBJ databases">
        <authorList>
            <consortium name="Sanger Xenopus tropicalis EST/cDNA project"/>
        </authorList>
    </citation>
    <scope>NUCLEOTIDE SEQUENCE [LARGE SCALE MRNA]</scope>
    <source>
        <tissue evidence="3">Egg</tissue>
    </source>
</reference>
<proteinExistence type="evidence at transcript level"/>
<feature type="chain" id="PRO_0000317054" description="S100P-binding protein">
    <location>
        <begin position="1"/>
        <end position="571"/>
    </location>
</feature>
<feature type="region of interest" description="Disordered" evidence="2">
    <location>
        <begin position="270"/>
        <end position="312"/>
    </location>
</feature>
<feature type="region of interest" description="Disordered" evidence="2">
    <location>
        <begin position="356"/>
        <end position="385"/>
    </location>
</feature>
<feature type="compositionally biased region" description="Acidic residues" evidence="2">
    <location>
        <begin position="270"/>
        <end position="280"/>
    </location>
</feature>
<feature type="compositionally biased region" description="Polar residues" evidence="2">
    <location>
        <begin position="299"/>
        <end position="309"/>
    </location>
</feature>
<feature type="compositionally biased region" description="Pro residues" evidence="2">
    <location>
        <begin position="365"/>
        <end position="378"/>
    </location>
</feature>
<organism>
    <name type="scientific">Xenopus tropicalis</name>
    <name type="common">Western clawed frog</name>
    <name type="synonym">Silurana tropicalis</name>
    <dbReference type="NCBI Taxonomy" id="8364"/>
    <lineage>
        <taxon>Eukaryota</taxon>
        <taxon>Metazoa</taxon>
        <taxon>Chordata</taxon>
        <taxon>Craniata</taxon>
        <taxon>Vertebrata</taxon>
        <taxon>Euteleostomi</taxon>
        <taxon>Amphibia</taxon>
        <taxon>Batrachia</taxon>
        <taxon>Anura</taxon>
        <taxon>Pipoidea</taxon>
        <taxon>Pipidae</taxon>
        <taxon>Xenopodinae</taxon>
        <taxon>Xenopus</taxon>
        <taxon>Silurana</taxon>
    </lineage>
</organism>
<protein>
    <recommendedName>
        <fullName>S100P-binding protein</fullName>
    </recommendedName>
</protein>
<gene>
    <name type="primary">s100pbp</name>
    <name type="ORF">TEgg037a18.1</name>
</gene>
<name>S1PBP_XENTR</name>